<protein>
    <recommendedName>
        <fullName evidence="6 7">Phospholipase C</fullName>
        <shortName>PLC</shortName>
        <ecNumber evidence="2 3 4">3.1.4.3</ecNumber>
    </recommendedName>
    <alternativeName>
        <fullName evidence="6">29-kDa phospholipase C</fullName>
        <shortName evidence="6">29-kDa PLC</shortName>
    </alternativeName>
    <alternativeName>
        <fullName evidence="7">Broad-range phospholipase C</fullName>
    </alternativeName>
    <alternativeName>
        <fullName evidence="5 6">Lecithinase</fullName>
    </alternativeName>
    <alternativeName>
        <fullName evidence="7">LmPC-PLC</fullName>
    </alternativeName>
    <alternativeName>
        <fullName>Phosphatidylcholine cholinephosphohydrolase</fullName>
    </alternativeName>
</protein>
<evidence type="ECO:0000255" key="1">
    <source>
        <dbReference type="PROSITE-ProRule" id="PRU00678"/>
    </source>
</evidence>
<evidence type="ECO:0000269" key="2">
    <source>
    </source>
</evidence>
<evidence type="ECO:0000269" key="3">
    <source>
    </source>
</evidence>
<evidence type="ECO:0000269" key="4">
    <source>
    </source>
</evidence>
<evidence type="ECO:0000303" key="5">
    <source>
    </source>
</evidence>
<evidence type="ECO:0000303" key="6">
    <source>
    </source>
</evidence>
<evidence type="ECO:0000303" key="7">
    <source>
    </source>
</evidence>
<evidence type="ECO:0000305" key="8"/>
<evidence type="ECO:0000305" key="9">
    <source>
    </source>
</evidence>
<evidence type="ECO:0000305" key="10">
    <source>
    </source>
</evidence>
<evidence type="ECO:0000305" key="11">
    <source>
    </source>
</evidence>
<evidence type="ECO:0000305" key="12">
    <source>
    </source>
</evidence>
<evidence type="ECO:0007744" key="13">
    <source>
        <dbReference type="PDB" id="8CQM"/>
    </source>
</evidence>
<evidence type="ECO:0007829" key="14">
    <source>
        <dbReference type="PDB" id="8CQM"/>
    </source>
</evidence>
<proteinExistence type="evidence at protein level"/>
<keyword id="KW-0002">3D-structure</keyword>
<keyword id="KW-0903">Direct protein sequencing</keyword>
<keyword id="KW-0378">Hydrolase</keyword>
<keyword id="KW-0479">Metal-binding</keyword>
<keyword id="KW-1185">Reference proteome</keyword>
<keyword id="KW-0964">Secreted</keyword>
<keyword id="KW-0732">Signal</keyword>
<keyword id="KW-0843">Virulence</keyword>
<keyword id="KW-0862">Zinc</keyword>
<keyword id="KW-0865">Zymogen</keyword>
<name>PHLC_LISMO</name>
<dbReference type="EC" id="3.1.4.3" evidence="2 3 4"/>
<dbReference type="EMBL" id="M82881">
    <property type="protein sequence ID" value="AAA25270.1"/>
    <property type="molecule type" value="Genomic_DNA"/>
</dbReference>
<dbReference type="EMBL" id="X59723">
    <property type="protein sequence ID" value="CAA42408.1"/>
    <property type="molecule type" value="Genomic_DNA"/>
</dbReference>
<dbReference type="EMBL" id="AL591974">
    <property type="protein sequence ID" value="CAD00732.1"/>
    <property type="molecule type" value="Genomic_DNA"/>
</dbReference>
<dbReference type="PIR" id="AF1100">
    <property type="entry name" value="AF1100"/>
</dbReference>
<dbReference type="PIR" id="C43868">
    <property type="entry name" value="C43868"/>
</dbReference>
<dbReference type="PIR" id="S20888">
    <property type="entry name" value="S20888"/>
</dbReference>
<dbReference type="RefSeq" id="NP_463736.1">
    <property type="nucleotide sequence ID" value="NC_003210.1"/>
</dbReference>
<dbReference type="RefSeq" id="WP_010989375.1">
    <property type="nucleotide sequence ID" value="NZ_CP149495.1"/>
</dbReference>
<dbReference type="PDB" id="8CQM">
    <property type="method" value="X-ray"/>
    <property type="resolution" value="2.00 A"/>
    <property type="chains" value="A/B=52-289"/>
</dbReference>
<dbReference type="PDBsum" id="8CQM"/>
<dbReference type="SMR" id="P33378"/>
<dbReference type="STRING" id="169963.gene:17592841"/>
<dbReference type="PaxDb" id="169963-lmo0205"/>
<dbReference type="EnsemblBacteria" id="CAD00732">
    <property type="protein sequence ID" value="CAD00732"/>
    <property type="gene ID" value="CAD00732"/>
</dbReference>
<dbReference type="GeneID" id="987036"/>
<dbReference type="KEGG" id="lmo:lmo0205"/>
<dbReference type="PATRIC" id="fig|169963.11.peg.210"/>
<dbReference type="eggNOG" id="ENOG5030A2K">
    <property type="taxonomic scope" value="Bacteria"/>
</dbReference>
<dbReference type="HOGENOM" id="CLU_841040_0_0_9"/>
<dbReference type="OrthoDB" id="1937927at2"/>
<dbReference type="BioCyc" id="LMON169963:LMO0205-MONOMER"/>
<dbReference type="Proteomes" id="UP000000817">
    <property type="component" value="Chromosome"/>
</dbReference>
<dbReference type="GO" id="GO:0005576">
    <property type="term" value="C:extracellular region"/>
    <property type="evidence" value="ECO:0007669"/>
    <property type="project" value="UniProtKB-SubCell"/>
</dbReference>
<dbReference type="GO" id="GO:0034480">
    <property type="term" value="F:phosphatidylcholine phospholipase C activity"/>
    <property type="evidence" value="ECO:0007669"/>
    <property type="project" value="UniProtKB-EC"/>
</dbReference>
<dbReference type="GO" id="GO:0004767">
    <property type="term" value="F:sphingomyelin phosphodiesterase activity"/>
    <property type="evidence" value="ECO:0007669"/>
    <property type="project" value="RHEA"/>
</dbReference>
<dbReference type="GO" id="GO:0008270">
    <property type="term" value="F:zinc ion binding"/>
    <property type="evidence" value="ECO:0007669"/>
    <property type="project" value="InterPro"/>
</dbReference>
<dbReference type="CDD" id="cd11009">
    <property type="entry name" value="Zn_dep_PLPC"/>
    <property type="match status" value="1"/>
</dbReference>
<dbReference type="Gene3D" id="1.10.575.10">
    <property type="entry name" value="P1 Nuclease"/>
    <property type="match status" value="1"/>
</dbReference>
<dbReference type="InterPro" id="IPR008947">
    <property type="entry name" value="PLipase_C/P1_nuclease_dom_sf"/>
</dbReference>
<dbReference type="InterPro" id="IPR029002">
    <property type="entry name" value="PLPC/GPLD1"/>
</dbReference>
<dbReference type="InterPro" id="IPR001531">
    <property type="entry name" value="Zn_PLipaseC"/>
</dbReference>
<dbReference type="Pfam" id="PF00882">
    <property type="entry name" value="Zn_dep_PLPC"/>
    <property type="match status" value="1"/>
</dbReference>
<dbReference type="PRINTS" id="PR00479">
    <property type="entry name" value="PRPHPHLPASEC"/>
</dbReference>
<dbReference type="SMART" id="SM00770">
    <property type="entry name" value="Zn_dep_PLPC"/>
    <property type="match status" value="1"/>
</dbReference>
<dbReference type="SUPFAM" id="SSF48537">
    <property type="entry name" value="Phospholipase C/P1 nuclease"/>
    <property type="match status" value="1"/>
</dbReference>
<dbReference type="PROSITE" id="PS00384">
    <property type="entry name" value="PROKAR_ZN_DEPEND_PLPC_1"/>
    <property type="match status" value="1"/>
</dbReference>
<dbReference type="PROSITE" id="PS51346">
    <property type="entry name" value="PROKAR_ZN_DEPEND_PLPC_2"/>
    <property type="match status" value="1"/>
</dbReference>
<comment type="function">
    <text evidence="2 3 4">Major virulence factor whose phospholipase activity facilitates pore formation by the pore-forming toxin listeriolysin O (LLO), leading to vacuolar membrane disruption and vacuolar escape of L.monocytogenes, which enables the bacterium to spread in the host (PubMed:37838694). Acts as a phospholipase C exhibiting broad substrate specificity, with the highest activities towards diacylglycerophospholipids with phosphocholine, phosphoserine, and phosphoethanolamine head groups, but less towards phosphoglycerol or phosphoinositol head groups (PubMed:1904842, PubMed:37838694, PubMed:8331063). Is also able to hydrolyze sphingomyelin and plasmenylethanolamine (PubMed:1904842, PubMed:8331063).</text>
</comment>
<comment type="catalytic activity">
    <reaction evidence="2 3 4">
        <text>a 1,2-diacyl-sn-glycero-3-phosphocholine + H2O = phosphocholine + a 1,2-diacyl-sn-glycerol + H(+)</text>
        <dbReference type="Rhea" id="RHEA:10604"/>
        <dbReference type="ChEBI" id="CHEBI:15377"/>
        <dbReference type="ChEBI" id="CHEBI:15378"/>
        <dbReference type="ChEBI" id="CHEBI:17815"/>
        <dbReference type="ChEBI" id="CHEBI:57643"/>
        <dbReference type="ChEBI" id="CHEBI:295975"/>
        <dbReference type="EC" id="3.1.4.3"/>
    </reaction>
    <physiologicalReaction direction="left-to-right" evidence="10 11 12">
        <dbReference type="Rhea" id="RHEA:10605"/>
    </physiologicalReaction>
</comment>
<comment type="catalytic activity">
    <reaction evidence="2 4">
        <text>1,2-dihexadecanoyl-sn-glycero-3-phosphocholine + H2O = 1,2-dihexadecanoyl-sn-glycerol + phosphocholine + H(+)</text>
        <dbReference type="Rhea" id="RHEA:45304"/>
        <dbReference type="ChEBI" id="CHEBI:15377"/>
        <dbReference type="ChEBI" id="CHEBI:15378"/>
        <dbReference type="ChEBI" id="CHEBI:72999"/>
        <dbReference type="ChEBI" id="CHEBI:82929"/>
        <dbReference type="ChEBI" id="CHEBI:295975"/>
    </reaction>
    <physiologicalReaction direction="left-to-right" evidence="10 12">
        <dbReference type="Rhea" id="RHEA:45305"/>
    </physiologicalReaction>
</comment>
<comment type="catalytic activity">
    <reaction evidence="3">
        <text>1-hexadecanoyl-2-(9Z-octadecenoyl)-sn-glycero-3-phosphocholine + H2O = 1-hexadecanoyl-2-(9Z-octadecenoyl)-sn-glycerol + phosphocholine + H(+)</text>
        <dbReference type="Rhea" id="RHEA:78939"/>
        <dbReference type="ChEBI" id="CHEBI:15377"/>
        <dbReference type="ChEBI" id="CHEBI:15378"/>
        <dbReference type="ChEBI" id="CHEBI:73001"/>
        <dbReference type="ChEBI" id="CHEBI:75466"/>
        <dbReference type="ChEBI" id="CHEBI:295975"/>
    </reaction>
    <physiologicalReaction direction="left-to-right" evidence="11">
        <dbReference type="Rhea" id="RHEA:78940"/>
    </physiologicalReaction>
</comment>
<comment type="catalytic activity">
    <reaction evidence="4">
        <text>1,2-di-(9Z-octadecenoyl)-sn-glycero-3-phosphocholine + H2O = 1,2-di-(9Z-octadecenoyl)-sn-glycerol + phosphocholine + H(+)</text>
        <dbReference type="Rhea" id="RHEA:78947"/>
        <dbReference type="ChEBI" id="CHEBI:15377"/>
        <dbReference type="ChEBI" id="CHEBI:15378"/>
        <dbReference type="ChEBI" id="CHEBI:52333"/>
        <dbReference type="ChEBI" id="CHEBI:74669"/>
        <dbReference type="ChEBI" id="CHEBI:295975"/>
    </reaction>
    <physiologicalReaction direction="left-to-right" evidence="12">
        <dbReference type="Rhea" id="RHEA:78948"/>
    </physiologicalReaction>
</comment>
<comment type="catalytic activity">
    <reaction evidence="2 4">
        <text>a 1,2-diacyl-sn-glycero-3-phosphoethanolamine + H2O = phosphoethanolamine + a 1,2-diacyl-sn-glycerol + H(+)</text>
        <dbReference type="Rhea" id="RHEA:78951"/>
        <dbReference type="ChEBI" id="CHEBI:15377"/>
        <dbReference type="ChEBI" id="CHEBI:15378"/>
        <dbReference type="ChEBI" id="CHEBI:17815"/>
        <dbReference type="ChEBI" id="CHEBI:58190"/>
        <dbReference type="ChEBI" id="CHEBI:64612"/>
    </reaction>
    <physiologicalReaction direction="left-to-right" evidence="10 12">
        <dbReference type="Rhea" id="RHEA:78952"/>
    </physiologicalReaction>
</comment>
<comment type="catalytic activity">
    <reaction evidence="4">
        <text>1,2-di-(9Z-octadecenoyl)-sn-glycero-3-phosphoethanolamine + H2O = phosphoethanolamine + 1,2-di-(9Z-octadecenoyl)-sn-glycerol + H(+)</text>
        <dbReference type="Rhea" id="RHEA:78955"/>
        <dbReference type="ChEBI" id="CHEBI:15377"/>
        <dbReference type="ChEBI" id="CHEBI:15378"/>
        <dbReference type="ChEBI" id="CHEBI:52333"/>
        <dbReference type="ChEBI" id="CHEBI:58190"/>
        <dbReference type="ChEBI" id="CHEBI:74986"/>
    </reaction>
    <physiologicalReaction direction="left-to-right" evidence="12">
        <dbReference type="Rhea" id="RHEA:78956"/>
    </physiologicalReaction>
</comment>
<comment type="catalytic activity">
    <reaction evidence="4">
        <text>1,2-dihexadecanoyl-sn-glycero-3-phosphoethanolamine + H2O = 1,2-dihexadecanoyl-sn-glycerol + phosphoethanolamine + H(+)</text>
        <dbReference type="Rhea" id="RHEA:78959"/>
        <dbReference type="ChEBI" id="CHEBI:15377"/>
        <dbReference type="ChEBI" id="CHEBI:15378"/>
        <dbReference type="ChEBI" id="CHEBI:58190"/>
        <dbReference type="ChEBI" id="CHEBI:73005"/>
        <dbReference type="ChEBI" id="CHEBI:82929"/>
    </reaction>
    <physiologicalReaction direction="left-to-right" evidence="12">
        <dbReference type="Rhea" id="RHEA:78960"/>
    </physiologicalReaction>
</comment>
<comment type="catalytic activity">
    <reaction evidence="2 4">
        <text>a 1,2-diacyl-sn-glycero-3-phospho-L-serine + H2O = O-phospho-L-serine + a 1,2-diacyl-sn-glycerol + H(+)</text>
        <dbReference type="Rhea" id="RHEA:78963"/>
        <dbReference type="ChEBI" id="CHEBI:15377"/>
        <dbReference type="ChEBI" id="CHEBI:15378"/>
        <dbReference type="ChEBI" id="CHEBI:17815"/>
        <dbReference type="ChEBI" id="CHEBI:57262"/>
        <dbReference type="ChEBI" id="CHEBI:57524"/>
    </reaction>
    <physiologicalReaction direction="left-to-right" evidence="10 12">
        <dbReference type="Rhea" id="RHEA:78964"/>
    </physiologicalReaction>
</comment>
<comment type="catalytic activity">
    <reaction evidence="4">
        <text>a 1,2-diacyl-sn-glycero-3-phosphoglycerol + H2O = glycerol 1-phosphate + a 1,2-diacyl-sn-glycerol + H(+)</text>
        <dbReference type="Rhea" id="RHEA:78967"/>
        <dbReference type="ChEBI" id="CHEBI:15377"/>
        <dbReference type="ChEBI" id="CHEBI:15378"/>
        <dbReference type="ChEBI" id="CHEBI:17815"/>
        <dbReference type="ChEBI" id="CHEBI:145394"/>
        <dbReference type="ChEBI" id="CHEBI:231935"/>
    </reaction>
    <physiologicalReaction direction="left-to-right" evidence="12">
        <dbReference type="Rhea" id="RHEA:78968"/>
    </physiologicalReaction>
</comment>
<comment type="catalytic activity">
    <reaction evidence="4">
        <text>a 1,2-diacyl-sn-glycero-3-phospho-(1D-myo-inositol) + H2O = 1D-myo-inositol 1-phosphate + a 1,2-diacyl-sn-glycerol + H(+)</text>
        <dbReference type="Rhea" id="RHEA:43484"/>
        <dbReference type="ChEBI" id="CHEBI:15377"/>
        <dbReference type="ChEBI" id="CHEBI:15378"/>
        <dbReference type="ChEBI" id="CHEBI:17815"/>
        <dbReference type="ChEBI" id="CHEBI:57880"/>
        <dbReference type="ChEBI" id="CHEBI:58433"/>
    </reaction>
    <physiologicalReaction direction="left-to-right" evidence="12">
        <dbReference type="Rhea" id="RHEA:43485"/>
    </physiologicalReaction>
</comment>
<comment type="catalytic activity">
    <reaction evidence="2 4">
        <text>a sphingomyelin + H2O = phosphocholine + an N-acylsphing-4-enine + H(+)</text>
        <dbReference type="Rhea" id="RHEA:19253"/>
        <dbReference type="ChEBI" id="CHEBI:15377"/>
        <dbReference type="ChEBI" id="CHEBI:15378"/>
        <dbReference type="ChEBI" id="CHEBI:17636"/>
        <dbReference type="ChEBI" id="CHEBI:52639"/>
        <dbReference type="ChEBI" id="CHEBI:295975"/>
    </reaction>
    <physiologicalReaction direction="left-to-right" evidence="10 12">
        <dbReference type="Rhea" id="RHEA:19254"/>
    </physiologicalReaction>
</comment>
<comment type="catalytic activity">
    <reaction evidence="4">
        <text>a 1-O-(1Z-alkenyl)-2-acyl-sn-glycero-3-phosphoethanolamine + H2O = a 1-O-(1Z-alkenyl)-2-acyl-sn-glycerol + phosphoethanolamine + H(+)</text>
        <dbReference type="Rhea" id="RHEA:36223"/>
        <dbReference type="ChEBI" id="CHEBI:15377"/>
        <dbReference type="ChEBI" id="CHEBI:15378"/>
        <dbReference type="ChEBI" id="CHEBI:58190"/>
        <dbReference type="ChEBI" id="CHEBI:77290"/>
        <dbReference type="ChEBI" id="CHEBI:77296"/>
    </reaction>
    <physiologicalReaction direction="left-to-right" evidence="12">
        <dbReference type="Rhea" id="RHEA:36224"/>
    </physiologicalReaction>
</comment>
<comment type="cofactor">
    <cofactor evidence="2 3">
        <name>Zn(2+)</name>
        <dbReference type="ChEBI" id="CHEBI:29105"/>
    </cofactor>
    <text evidence="1 3">Enzymatic activity is specifically dependent on the presence of Zn ions, since Cd(2+), Cu(2+), Ni(2+), Co(2+), Fe(2+), Mn(2+), Ca(2+) and Mg(2+) cannot substitute (PubMed:37838694). Binds 3 Zn(2+) ions per subunit (By similarity).</text>
</comment>
<comment type="activity regulation">
    <text evidence="2 3 4">Enzymatic activity of LmPC-PLC can be specifically inhibited by its propeptide added in trans (PubMed:37838694). The tendency of the enzyme to oligomerize, which appears to largely attenuate the enzymatic activity, may be one of the mechanisms regulating phospholipase activity in the host cell during the different steps of the infection cycle of L.monocytogenes (PubMed:37838694). Enzyme activity is inhibited by EDTA and o-phenanthroline in vitro (PubMed:1904842, PubMed:8331063).</text>
</comment>
<comment type="biophysicochemical properties">
    <phDependence>
        <text evidence="2 3">Optimum pH is about 6.5.</text>
    </phDependence>
</comment>
<comment type="subunit">
    <text evidence="3">Forms monomers, dimers and higher order oligomers, but only the monomer is enzymatically active.</text>
</comment>
<comment type="subcellular location">
    <subcellularLocation>
        <location evidence="2">Secreted</location>
    </subcellularLocation>
</comment>
<comment type="similarity">
    <text evidence="1">Belongs to the bacterial zinc-metallophospholipase C family.</text>
</comment>
<organism>
    <name type="scientific">Listeria monocytogenes serovar 1/2a (strain ATCC BAA-679 / EGD-e)</name>
    <dbReference type="NCBI Taxonomy" id="169963"/>
    <lineage>
        <taxon>Bacteria</taxon>
        <taxon>Bacillati</taxon>
        <taxon>Bacillota</taxon>
        <taxon>Bacilli</taxon>
        <taxon>Bacillales</taxon>
        <taxon>Listeriaceae</taxon>
        <taxon>Listeria</taxon>
    </lineage>
</organism>
<gene>
    <name evidence="5 7" type="primary">plcB</name>
    <name type="synonym">prtC</name>
    <name type="ordered locus">lmo0205</name>
</gene>
<accession>P33378</accession>
<sequence length="289" mass="33278">MKFKKVVLGMCLIASVLVFPVTIKANACCDEYLQTPAAPHDIDSKLPHKLSWSADNPTNTDVNTHYWLFKQAEKILAKDVNHMRANLMNELKKFDKQIAQGIYDADHKNPYYDTSTFLSHFYNPDRDNTYLPGFANAKITGAKYFNQSVTDYREGKFDTAFYKLGLAIHYYTDISQPMHANNFTAISYPPGYHCAYENYVDTIKHNYQATEDMVAKRFCSDDVKDWLYENAKRAKADYPKIVNAKTKKSYLVGNSEWKKDTVEPTGARLRDSQQTLAGFLEFWSKKTNE</sequence>
<reference key="1">
    <citation type="journal article" date="1992" name="Infect. Immun.">
        <title>Nucleotide sequence of the lecithinase operon of Listeria monocytogenes and possible role of lecithinase in cell-to-cell spread.</title>
        <authorList>
            <person name="Vazquez-Boland J.-A."/>
            <person name="Kocks C."/>
            <person name="Dramsi S."/>
            <person name="Ohayon H."/>
            <person name="Geoffroy C."/>
            <person name="Mengaud J."/>
            <person name="Cossart P."/>
        </authorList>
    </citation>
    <scope>NUCLEOTIDE SEQUENCE [GENOMIC DNA]</scope>
    <source>
        <strain>LO28 / Serovar 1/2c</strain>
    </source>
</reference>
<reference key="2">
    <citation type="journal article" date="1992" name="EMBO J.">
        <title>A novel bacterial virulence gene in Listeria monocytogenes required for host cell microfilament interaction with homology to the proline-rich region of vinculin.</title>
        <authorList>
            <person name="Domann E."/>
            <person name="Wehland J."/>
            <person name="Rohde M."/>
            <person name="Pistor S."/>
            <person name="Hartl M."/>
            <person name="Goebel W."/>
            <person name="Leimeister-Waechter M."/>
            <person name="Wuensher M."/>
            <person name="Chakraborty T."/>
        </authorList>
    </citation>
    <scope>NUCLEOTIDE SEQUENCE [GENOMIC DNA]</scope>
    <source>
        <strain>EGD / Serovar 1/2a</strain>
    </source>
</reference>
<reference key="3">
    <citation type="journal article" date="2001" name="Science">
        <title>Comparative genomics of Listeria species.</title>
        <authorList>
            <person name="Glaser P."/>
            <person name="Frangeul L."/>
            <person name="Buchrieser C."/>
            <person name="Rusniok C."/>
            <person name="Amend A."/>
            <person name="Baquero F."/>
            <person name="Berche P."/>
            <person name="Bloecker H."/>
            <person name="Brandt P."/>
            <person name="Chakraborty T."/>
            <person name="Charbit A."/>
            <person name="Chetouani F."/>
            <person name="Couve E."/>
            <person name="de Daruvar A."/>
            <person name="Dehoux P."/>
            <person name="Domann E."/>
            <person name="Dominguez-Bernal G."/>
            <person name="Duchaud E."/>
            <person name="Durant L."/>
            <person name="Dussurget O."/>
            <person name="Entian K.-D."/>
            <person name="Fsihi H."/>
            <person name="Garcia-del Portillo F."/>
            <person name="Garrido P."/>
            <person name="Gautier L."/>
            <person name="Goebel W."/>
            <person name="Gomez-Lopez N."/>
            <person name="Hain T."/>
            <person name="Hauf J."/>
            <person name="Jackson D."/>
            <person name="Jones L.-M."/>
            <person name="Kaerst U."/>
            <person name="Kreft J."/>
            <person name="Kuhn M."/>
            <person name="Kunst F."/>
            <person name="Kurapkat G."/>
            <person name="Madueno E."/>
            <person name="Maitournam A."/>
            <person name="Mata Vicente J."/>
            <person name="Ng E."/>
            <person name="Nedjari H."/>
            <person name="Nordsiek G."/>
            <person name="Novella S."/>
            <person name="de Pablos B."/>
            <person name="Perez-Diaz J.-C."/>
            <person name="Purcell R."/>
            <person name="Remmel B."/>
            <person name="Rose M."/>
            <person name="Schlueter T."/>
            <person name="Simoes N."/>
            <person name="Tierrez A."/>
            <person name="Vazquez-Boland J.-A."/>
            <person name="Voss H."/>
            <person name="Wehland J."/>
            <person name="Cossart P."/>
        </authorList>
    </citation>
    <scope>NUCLEOTIDE SEQUENCE [LARGE SCALE GENOMIC DNA]</scope>
    <source>
        <strain>ATCC BAA-679 / EGD-e</strain>
    </source>
</reference>
<reference key="4">
    <citation type="journal article" date="1991" name="Infect. Immun.">
        <title>Purification and characterization of an extracellular 29-kilodalton phospholipase C from Listeria monocytogenes.</title>
        <authorList>
            <person name="Geoffroy C."/>
            <person name="Raveneau J."/>
            <person name="Beretti J.-L."/>
            <person name="Lecroisey A."/>
            <person name="Vazquez-Boland J.-A."/>
            <person name="Alouf J.E."/>
            <person name="Berche P."/>
        </authorList>
    </citation>
    <scope>PROTEIN SEQUENCE OF 144-152</scope>
    <scope>FUNCTION</scope>
    <scope>CATALYTIC ACTIVITY</scope>
    <scope>SUBSTRATE SPECIFICITY</scope>
    <scope>COFACTOR</scope>
    <scope>BIOPHYSICOCHEMICAL PROPERTIES</scope>
    <scope>SUBCELLULAR LOCATION</scope>
    <source>
        <strain>EGD / Serovar 1/2a</strain>
    </source>
</reference>
<reference key="5">
    <citation type="journal article" date="1993" name="J. Bacteriol.">
        <title>Nonspecific phospholipase C of Listeria monocytogenes: activity on phospholipids in Triton X-100-mixed micelles and in biological membranes.</title>
        <authorList>
            <person name="Goldfine H."/>
            <person name="Johnston N.C."/>
            <person name="Knob C."/>
        </authorList>
    </citation>
    <scope>FUNCTION</scope>
    <scope>CATALYTIC ACTIVITY</scope>
    <scope>SUBSTRATE SPECIFICITY</scope>
    <scope>ACTIVITY REGULATION</scope>
</reference>
<reference evidence="13" key="6">
    <citation type="journal article" date="2023" name="Nat. Commun.">
        <title>Structural basis for the unique molecular properties of broad-range phospholipase C from Listeria monocytogenes.</title>
        <authorList>
            <person name="Petrisic N."/>
            <person name="Adamek M."/>
            <person name="Kezar A."/>
            <person name="Hocevar S.B."/>
            <person name="Zagar E."/>
            <person name="Anderluh G."/>
            <person name="Podobnik M."/>
        </authorList>
    </citation>
    <scope>X-RAY CRYSTALLOGRAPHY (2.00 ANGSTROMS) OF 52-289 IN COMPLEX WITH ZN(2+) AND FE(3+)</scope>
    <scope>FUNCTION</scope>
    <scope>CATALYTIC ACTIVITY</scope>
    <scope>COFACTOR</scope>
    <scope>BIOPHYSICOCHEMICAL PROPERTIES</scope>
    <scope>SUBUNIT</scope>
    <scope>ACTIVITY REGULATION</scope>
    <scope>MUTAGENESIS OF TRP-52</scope>
</reference>
<feature type="signal peptide" evidence="9">
    <location>
        <begin position="1"/>
        <end position="25"/>
    </location>
</feature>
<feature type="propeptide" id="PRO_0000023937" evidence="9">
    <location>
        <begin position="26"/>
        <end position="51"/>
    </location>
</feature>
<feature type="chain" id="PRO_0000023938" description="Phospholipase C">
    <location>
        <begin position="52"/>
        <end position="289"/>
    </location>
</feature>
<feature type="domain" description="Zn-dependent PLC" evidence="1">
    <location>
        <begin position="52"/>
        <end position="289"/>
    </location>
</feature>
<feature type="binding site" evidence="1">
    <location>
        <position position="52"/>
    </location>
    <ligand>
        <name>Zn(2+)</name>
        <dbReference type="ChEBI" id="CHEBI:29105"/>
        <label>1</label>
    </ligand>
</feature>
<feature type="binding site" evidence="1">
    <location>
        <position position="65"/>
    </location>
    <ligand>
        <name>Zn(2+)</name>
        <dbReference type="ChEBI" id="CHEBI:29105"/>
        <label>1</label>
    </ligand>
</feature>
<feature type="binding site" evidence="1">
    <location>
        <position position="106"/>
    </location>
    <ligand>
        <name>Zn(2+)</name>
        <dbReference type="ChEBI" id="CHEBI:29105"/>
        <label>3</label>
    </ligand>
</feature>
<feature type="binding site" evidence="1 3 13">
    <location>
        <position position="120"/>
    </location>
    <ligand>
        <name>Zn(2+)</name>
        <dbReference type="ChEBI" id="CHEBI:29105"/>
        <label>3</label>
    </ligand>
</feature>
<feature type="binding site" evidence="1 3 13">
    <location>
        <position position="169"/>
    </location>
    <ligand>
        <name>Zn(2+)</name>
        <dbReference type="ChEBI" id="CHEBI:29105"/>
        <label>3</label>
    </ligand>
</feature>
<feature type="binding site" evidence="1">
    <location>
        <position position="173"/>
    </location>
    <ligand>
        <name>Zn(2+)</name>
        <dbReference type="ChEBI" id="CHEBI:29105"/>
        <label>1</label>
    </ligand>
</feature>
<feature type="binding site" evidence="1 3 13">
    <location>
        <position position="173"/>
    </location>
    <ligand>
        <name>Zn(2+)</name>
        <dbReference type="ChEBI" id="CHEBI:29105"/>
        <label>3</label>
    </ligand>
</feature>
<feature type="binding site" evidence="1">
    <location>
        <position position="179"/>
    </location>
    <ligand>
        <name>Zn(2+)</name>
        <dbReference type="ChEBI" id="CHEBI:29105"/>
        <label>2</label>
    </ligand>
</feature>
<feature type="binding site" evidence="1">
    <location>
        <position position="193"/>
    </location>
    <ligand>
        <name>Zn(2+)</name>
        <dbReference type="ChEBI" id="CHEBI:29105"/>
        <label>2</label>
    </ligand>
</feature>
<feature type="binding site" evidence="1">
    <location>
        <position position="197"/>
    </location>
    <ligand>
        <name>Zn(2+)</name>
        <dbReference type="ChEBI" id="CHEBI:29105"/>
        <label>2</label>
    </ligand>
</feature>
<feature type="mutagenesis site" description="High decrease in catalytic activity." evidence="3">
    <original>W</original>
    <variation>A</variation>
    <variation>E</variation>
    <variation>K</variation>
    <location>
        <position position="52"/>
    </location>
</feature>
<feature type="mutagenesis site" description="No change in catalytic activity." evidence="3">
    <original>W</original>
    <variation>F</variation>
    <location>
        <position position="52"/>
    </location>
</feature>
<feature type="sequence conflict" description="In Ref. 2; CAA42408." evidence="8" ref="2">
    <original>K</original>
    <variation>N</variation>
    <location>
        <position position="5"/>
    </location>
</feature>
<feature type="sequence conflict" description="In Ref. 2; CAA42408." evidence="8" ref="2">
    <original>I</original>
    <variation>T</variation>
    <location>
        <position position="13"/>
    </location>
</feature>
<feature type="sequence conflict" description="In Ref. 2; CAA42408." evidence="8" ref="2">
    <original>D</original>
    <variation>G</variation>
    <location>
        <position position="222"/>
    </location>
</feature>
<feature type="helix" evidence="14">
    <location>
        <begin position="64"/>
        <end position="78"/>
    </location>
</feature>
<feature type="helix" evidence="14">
    <location>
        <begin position="82"/>
        <end position="93"/>
    </location>
</feature>
<feature type="helix" evidence="14">
    <location>
        <begin position="95"/>
        <end position="106"/>
    </location>
</feature>
<feature type="helix" evidence="14">
    <location>
        <begin position="109"/>
        <end position="111"/>
    </location>
</feature>
<feature type="helix" evidence="14">
    <location>
        <begin position="114"/>
        <end position="118"/>
    </location>
</feature>
<feature type="helix" evidence="14">
    <location>
        <begin position="137"/>
        <end position="153"/>
    </location>
</feature>
<feature type="helix" evidence="14">
    <location>
        <begin position="157"/>
        <end position="173"/>
    </location>
</feature>
<feature type="helix" evidence="14">
    <location>
        <begin position="177"/>
        <end position="180"/>
    </location>
</feature>
<feature type="strand" evidence="14">
    <location>
        <begin position="187"/>
        <end position="189"/>
    </location>
</feature>
<feature type="helix" evidence="14">
    <location>
        <begin position="192"/>
        <end position="203"/>
    </location>
</feature>
<feature type="helix" evidence="14">
    <location>
        <begin position="204"/>
        <end position="207"/>
    </location>
</feature>
<feature type="helix" evidence="14">
    <location>
        <begin position="223"/>
        <end position="236"/>
    </location>
</feature>
<feature type="helix" evidence="14">
    <location>
        <begin position="238"/>
        <end position="241"/>
    </location>
</feature>
<feature type="helix" evidence="14">
    <location>
        <begin position="244"/>
        <end position="252"/>
    </location>
</feature>
<feature type="helix" evidence="14">
    <location>
        <begin position="256"/>
        <end position="288"/>
    </location>
</feature>